<feature type="chain" id="PRO_0000101937" description="UDP-N-acetylmuramoyl-L-alanyl-D-glutamate--2,6-diaminopimelate ligase">
    <location>
        <begin position="1"/>
        <end position="495"/>
    </location>
</feature>
<feature type="short sequence motif" description="Meso-diaminopimelate recognition motif">
    <location>
        <begin position="414"/>
        <end position="417"/>
    </location>
</feature>
<feature type="binding site" evidence="1">
    <location>
        <position position="27"/>
    </location>
    <ligand>
        <name>UDP-N-acetyl-alpha-D-muramoyl-L-alanyl-D-glutamate</name>
        <dbReference type="ChEBI" id="CHEBI:83900"/>
    </ligand>
</feature>
<feature type="binding site" evidence="1">
    <location>
        <position position="29"/>
    </location>
    <ligand>
        <name>UDP-N-acetyl-alpha-D-muramoyl-L-alanyl-D-glutamate</name>
        <dbReference type="ChEBI" id="CHEBI:83900"/>
    </ligand>
</feature>
<feature type="binding site" evidence="1">
    <location>
        <begin position="44"/>
        <end position="46"/>
    </location>
    <ligand>
        <name>UDP-N-acetyl-alpha-D-muramoyl-L-alanyl-D-glutamate</name>
        <dbReference type="ChEBI" id="CHEBI:83900"/>
    </ligand>
</feature>
<feature type="binding site" evidence="1">
    <location>
        <begin position="116"/>
        <end position="122"/>
    </location>
    <ligand>
        <name>ATP</name>
        <dbReference type="ChEBI" id="CHEBI:30616"/>
    </ligand>
</feature>
<feature type="binding site" evidence="1">
    <location>
        <position position="157"/>
    </location>
    <ligand>
        <name>UDP-N-acetyl-alpha-D-muramoyl-L-alanyl-D-glutamate</name>
        <dbReference type="ChEBI" id="CHEBI:83900"/>
    </ligand>
</feature>
<feature type="binding site" evidence="1">
    <location>
        <begin position="158"/>
        <end position="159"/>
    </location>
    <ligand>
        <name>UDP-N-acetyl-alpha-D-muramoyl-L-alanyl-D-glutamate</name>
        <dbReference type="ChEBI" id="CHEBI:83900"/>
    </ligand>
</feature>
<feature type="binding site" evidence="1">
    <location>
        <position position="185"/>
    </location>
    <ligand>
        <name>UDP-N-acetyl-alpha-D-muramoyl-L-alanyl-D-glutamate</name>
        <dbReference type="ChEBI" id="CHEBI:83900"/>
    </ligand>
</feature>
<feature type="binding site" evidence="1">
    <location>
        <position position="191"/>
    </location>
    <ligand>
        <name>UDP-N-acetyl-alpha-D-muramoyl-L-alanyl-D-glutamate</name>
        <dbReference type="ChEBI" id="CHEBI:83900"/>
    </ligand>
</feature>
<feature type="binding site" evidence="1">
    <location>
        <position position="193"/>
    </location>
    <ligand>
        <name>UDP-N-acetyl-alpha-D-muramoyl-L-alanyl-D-glutamate</name>
        <dbReference type="ChEBI" id="CHEBI:83900"/>
    </ligand>
</feature>
<feature type="binding site" evidence="1">
    <location>
        <position position="390"/>
    </location>
    <ligand>
        <name>meso-2,6-diaminopimelate</name>
        <dbReference type="ChEBI" id="CHEBI:57791"/>
    </ligand>
</feature>
<feature type="binding site" evidence="1">
    <location>
        <begin position="414"/>
        <end position="417"/>
    </location>
    <ligand>
        <name>meso-2,6-diaminopimelate</name>
        <dbReference type="ChEBI" id="CHEBI:57791"/>
    </ligand>
</feature>
<feature type="binding site" evidence="1">
    <location>
        <position position="465"/>
    </location>
    <ligand>
        <name>meso-2,6-diaminopimelate</name>
        <dbReference type="ChEBI" id="CHEBI:57791"/>
    </ligand>
</feature>
<feature type="binding site" evidence="1">
    <location>
        <position position="469"/>
    </location>
    <ligand>
        <name>meso-2,6-diaminopimelate</name>
        <dbReference type="ChEBI" id="CHEBI:57791"/>
    </ligand>
</feature>
<feature type="modified residue" description="N6-carboxylysine" evidence="1">
    <location>
        <position position="225"/>
    </location>
</feature>
<gene>
    <name evidence="1" type="primary">murE</name>
    <name type="ordered locus">STM0123</name>
</gene>
<protein>
    <recommendedName>
        <fullName evidence="1">UDP-N-acetylmuramoyl-L-alanyl-D-glutamate--2,6-diaminopimelate ligase</fullName>
        <ecNumber evidence="1">6.3.2.13</ecNumber>
    </recommendedName>
    <alternativeName>
        <fullName evidence="1">Meso-A2pm-adding enzyme</fullName>
    </alternativeName>
    <alternativeName>
        <fullName evidence="1">Meso-diaminopimelate-adding enzyme</fullName>
    </alternativeName>
    <alternativeName>
        <fullName evidence="1">UDP-MurNAc-L-Ala-D-Glu:meso-diaminopimelate ligase</fullName>
    </alternativeName>
    <alternativeName>
        <fullName evidence="1">UDP-MurNAc-tripeptide synthetase</fullName>
    </alternativeName>
    <alternativeName>
        <fullName evidence="1">UDP-N-acetylmuramyl-tripeptide synthetase</fullName>
    </alternativeName>
</protein>
<dbReference type="EC" id="6.3.2.13" evidence="1"/>
<dbReference type="EMBL" id="AE006468">
    <property type="protein sequence ID" value="AAL19087.1"/>
    <property type="molecule type" value="Genomic_DNA"/>
</dbReference>
<dbReference type="RefSeq" id="NP_459128.1">
    <property type="nucleotide sequence ID" value="NC_003197.2"/>
</dbReference>
<dbReference type="RefSeq" id="WP_000775073.1">
    <property type="nucleotide sequence ID" value="NC_003197.2"/>
</dbReference>
<dbReference type="SMR" id="Q8ZRU7"/>
<dbReference type="STRING" id="99287.STM0123"/>
<dbReference type="PaxDb" id="99287-STM0123"/>
<dbReference type="GeneID" id="1251641"/>
<dbReference type="KEGG" id="stm:STM0123"/>
<dbReference type="PATRIC" id="fig|99287.12.peg.129"/>
<dbReference type="HOGENOM" id="CLU_022291_3_2_6"/>
<dbReference type="PhylomeDB" id="Q8ZRU7"/>
<dbReference type="BioCyc" id="SENT99287:STM0123-MONOMER"/>
<dbReference type="UniPathway" id="UPA00219"/>
<dbReference type="Proteomes" id="UP000001014">
    <property type="component" value="Chromosome"/>
</dbReference>
<dbReference type="GO" id="GO:0005737">
    <property type="term" value="C:cytoplasm"/>
    <property type="evidence" value="ECO:0007669"/>
    <property type="project" value="UniProtKB-SubCell"/>
</dbReference>
<dbReference type="GO" id="GO:0005524">
    <property type="term" value="F:ATP binding"/>
    <property type="evidence" value="ECO:0007669"/>
    <property type="project" value="UniProtKB-UniRule"/>
</dbReference>
<dbReference type="GO" id="GO:0000287">
    <property type="term" value="F:magnesium ion binding"/>
    <property type="evidence" value="ECO:0007669"/>
    <property type="project" value="UniProtKB-UniRule"/>
</dbReference>
<dbReference type="GO" id="GO:0008765">
    <property type="term" value="F:UDP-N-acetylmuramoylalanyl-D-glutamate-2,6-diaminopimelate ligase activity"/>
    <property type="evidence" value="ECO:0007669"/>
    <property type="project" value="UniProtKB-UniRule"/>
</dbReference>
<dbReference type="GO" id="GO:0051301">
    <property type="term" value="P:cell division"/>
    <property type="evidence" value="ECO:0007669"/>
    <property type="project" value="UniProtKB-KW"/>
</dbReference>
<dbReference type="GO" id="GO:0071555">
    <property type="term" value="P:cell wall organization"/>
    <property type="evidence" value="ECO:0007669"/>
    <property type="project" value="UniProtKB-KW"/>
</dbReference>
<dbReference type="GO" id="GO:0009252">
    <property type="term" value="P:peptidoglycan biosynthetic process"/>
    <property type="evidence" value="ECO:0007669"/>
    <property type="project" value="UniProtKB-UniRule"/>
</dbReference>
<dbReference type="GO" id="GO:0008360">
    <property type="term" value="P:regulation of cell shape"/>
    <property type="evidence" value="ECO:0007669"/>
    <property type="project" value="UniProtKB-KW"/>
</dbReference>
<dbReference type="FunFam" id="3.40.1190.10:FF:000006">
    <property type="entry name" value="UDP-N-acetylmuramoyl-L-alanyl-D-glutamate--2,6-diaminopimelate ligase"/>
    <property type="match status" value="1"/>
</dbReference>
<dbReference type="FunFam" id="3.40.1390.10:FF:000002">
    <property type="entry name" value="UDP-N-acetylmuramoyl-L-alanyl-D-glutamate--2,6-diaminopimelate ligase"/>
    <property type="match status" value="1"/>
</dbReference>
<dbReference type="FunFam" id="3.90.190.20:FF:000006">
    <property type="entry name" value="UDP-N-acetylmuramoyl-L-alanyl-D-glutamate--2,6-diaminopimelate ligase"/>
    <property type="match status" value="1"/>
</dbReference>
<dbReference type="Gene3D" id="3.90.190.20">
    <property type="entry name" value="Mur ligase, C-terminal domain"/>
    <property type="match status" value="1"/>
</dbReference>
<dbReference type="Gene3D" id="3.40.1190.10">
    <property type="entry name" value="Mur-like, catalytic domain"/>
    <property type="match status" value="1"/>
</dbReference>
<dbReference type="Gene3D" id="3.40.1390.10">
    <property type="entry name" value="MurE/MurF, N-terminal domain"/>
    <property type="match status" value="1"/>
</dbReference>
<dbReference type="HAMAP" id="MF_00208">
    <property type="entry name" value="MurE"/>
    <property type="match status" value="1"/>
</dbReference>
<dbReference type="InterPro" id="IPR036565">
    <property type="entry name" value="Mur-like_cat_sf"/>
</dbReference>
<dbReference type="InterPro" id="IPR004101">
    <property type="entry name" value="Mur_ligase_C"/>
</dbReference>
<dbReference type="InterPro" id="IPR036615">
    <property type="entry name" value="Mur_ligase_C_dom_sf"/>
</dbReference>
<dbReference type="InterPro" id="IPR013221">
    <property type="entry name" value="Mur_ligase_cen"/>
</dbReference>
<dbReference type="InterPro" id="IPR000713">
    <property type="entry name" value="Mur_ligase_N"/>
</dbReference>
<dbReference type="InterPro" id="IPR035911">
    <property type="entry name" value="MurE/MurF_N"/>
</dbReference>
<dbReference type="InterPro" id="IPR005761">
    <property type="entry name" value="UDP-N-AcMur-Glu-dNH2Pim_ligase"/>
</dbReference>
<dbReference type="NCBIfam" id="TIGR01085">
    <property type="entry name" value="murE"/>
    <property type="match status" value="1"/>
</dbReference>
<dbReference type="NCBIfam" id="NF001123">
    <property type="entry name" value="PRK00139.1-1"/>
    <property type="match status" value="1"/>
</dbReference>
<dbReference type="NCBIfam" id="NF001124">
    <property type="entry name" value="PRK00139.1-2"/>
    <property type="match status" value="1"/>
</dbReference>
<dbReference type="NCBIfam" id="NF001126">
    <property type="entry name" value="PRK00139.1-4"/>
    <property type="match status" value="1"/>
</dbReference>
<dbReference type="PANTHER" id="PTHR23135">
    <property type="entry name" value="MUR LIGASE FAMILY MEMBER"/>
    <property type="match status" value="1"/>
</dbReference>
<dbReference type="PANTHER" id="PTHR23135:SF4">
    <property type="entry name" value="UDP-N-ACETYLMURAMOYL-L-ALANYL-D-GLUTAMATE--2,6-DIAMINOPIMELATE LIGASE MURE HOMOLOG, CHLOROPLASTIC"/>
    <property type="match status" value="1"/>
</dbReference>
<dbReference type="Pfam" id="PF01225">
    <property type="entry name" value="Mur_ligase"/>
    <property type="match status" value="1"/>
</dbReference>
<dbReference type="Pfam" id="PF02875">
    <property type="entry name" value="Mur_ligase_C"/>
    <property type="match status" value="1"/>
</dbReference>
<dbReference type="Pfam" id="PF08245">
    <property type="entry name" value="Mur_ligase_M"/>
    <property type="match status" value="1"/>
</dbReference>
<dbReference type="SUPFAM" id="SSF53623">
    <property type="entry name" value="MurD-like peptide ligases, catalytic domain"/>
    <property type="match status" value="1"/>
</dbReference>
<dbReference type="SUPFAM" id="SSF53244">
    <property type="entry name" value="MurD-like peptide ligases, peptide-binding domain"/>
    <property type="match status" value="1"/>
</dbReference>
<dbReference type="SUPFAM" id="SSF63418">
    <property type="entry name" value="MurE/MurF N-terminal domain"/>
    <property type="match status" value="1"/>
</dbReference>
<accession>Q8ZRU7</accession>
<organism>
    <name type="scientific">Salmonella typhimurium (strain LT2 / SGSC1412 / ATCC 700720)</name>
    <dbReference type="NCBI Taxonomy" id="99287"/>
    <lineage>
        <taxon>Bacteria</taxon>
        <taxon>Pseudomonadati</taxon>
        <taxon>Pseudomonadota</taxon>
        <taxon>Gammaproteobacteria</taxon>
        <taxon>Enterobacterales</taxon>
        <taxon>Enterobacteriaceae</taxon>
        <taxon>Salmonella</taxon>
    </lineage>
</organism>
<comment type="function">
    <text evidence="1">Catalyzes the addition of meso-diaminopimelic acid to the nucleotide precursor UDP-N-acetylmuramoyl-L-alanyl-D-glutamate (UMAG) in the biosynthesis of bacterial cell-wall peptidoglycan.</text>
</comment>
<comment type="catalytic activity">
    <reaction evidence="1">
        <text>UDP-N-acetyl-alpha-D-muramoyl-L-alanyl-D-glutamate + meso-2,6-diaminopimelate + ATP = UDP-N-acetyl-alpha-D-muramoyl-L-alanyl-gamma-D-glutamyl-meso-2,6-diaminopimelate + ADP + phosphate + H(+)</text>
        <dbReference type="Rhea" id="RHEA:23676"/>
        <dbReference type="ChEBI" id="CHEBI:15378"/>
        <dbReference type="ChEBI" id="CHEBI:30616"/>
        <dbReference type="ChEBI" id="CHEBI:43474"/>
        <dbReference type="ChEBI" id="CHEBI:57791"/>
        <dbReference type="ChEBI" id="CHEBI:83900"/>
        <dbReference type="ChEBI" id="CHEBI:83905"/>
        <dbReference type="ChEBI" id="CHEBI:456216"/>
        <dbReference type="EC" id="6.3.2.13"/>
    </reaction>
</comment>
<comment type="cofactor">
    <cofactor evidence="1">
        <name>Mg(2+)</name>
        <dbReference type="ChEBI" id="CHEBI:18420"/>
    </cofactor>
</comment>
<comment type="pathway">
    <text evidence="1">Cell wall biogenesis; peptidoglycan biosynthesis.</text>
</comment>
<comment type="subcellular location">
    <subcellularLocation>
        <location evidence="1">Cytoplasm</location>
    </subcellularLocation>
</comment>
<comment type="PTM">
    <text evidence="1">Carboxylation is probably crucial for Mg(2+) binding and, consequently, for the gamma-phosphate positioning of ATP.</text>
</comment>
<comment type="similarity">
    <text evidence="1">Belongs to the MurCDEF family. MurE subfamily.</text>
</comment>
<sequence length="495" mass="53287">MADRNLRDLLAPWVAGLPARELREMTLDSRVAAAGDLFVAVVGHQADGRRYIPQAIAQGVAAIIAEAKDEASDGEIREMHGVPVVYLSQLNERLSALAGRFYHEPSENMRLVAVTGTNGKTTTTQLLAQWSQLLGETSAVMGTVGNGLLGKVIPTENTTGSAVDVQHVLASLVAQGATFGAMEVSSHGLVQHRVAALKFAASVFTNLSRDHLDYHGDMAHYEAAKWMLYSTHHHGQAIVNADDEVGRRWLASLPDAVAVSMEGHINPNCHGRWLKAEAVEYHDRGATIRFASSWGEGEIESRLMGAFNVSNLLLALATLLALGYPLTDLLKTAARLQPVCGRMEVFTAPGKPTVVVDYAHTPDALEKALQAARLHCAGKLWCVFGCGGDRDKGKRPLMGAIAEEFADIVVVTDDNPRTEEPRAIINDILAGMLDAGQVRVMEGRAEAVTNAIMQAKDNDVVLIAGKGHEDYQIVGTQRLDYSDRVTAARLLGVIA</sequence>
<keyword id="KW-0067">ATP-binding</keyword>
<keyword id="KW-0131">Cell cycle</keyword>
<keyword id="KW-0132">Cell division</keyword>
<keyword id="KW-0133">Cell shape</keyword>
<keyword id="KW-0961">Cell wall biogenesis/degradation</keyword>
<keyword id="KW-0963">Cytoplasm</keyword>
<keyword id="KW-0436">Ligase</keyword>
<keyword id="KW-0460">Magnesium</keyword>
<keyword id="KW-0547">Nucleotide-binding</keyword>
<keyword id="KW-0573">Peptidoglycan synthesis</keyword>
<keyword id="KW-1185">Reference proteome</keyword>
<evidence type="ECO:0000255" key="1">
    <source>
        <dbReference type="HAMAP-Rule" id="MF_00208"/>
    </source>
</evidence>
<reference key="1">
    <citation type="journal article" date="2001" name="Nature">
        <title>Complete genome sequence of Salmonella enterica serovar Typhimurium LT2.</title>
        <authorList>
            <person name="McClelland M."/>
            <person name="Sanderson K.E."/>
            <person name="Spieth J."/>
            <person name="Clifton S.W."/>
            <person name="Latreille P."/>
            <person name="Courtney L."/>
            <person name="Porwollik S."/>
            <person name="Ali J."/>
            <person name="Dante M."/>
            <person name="Du F."/>
            <person name="Hou S."/>
            <person name="Layman D."/>
            <person name="Leonard S."/>
            <person name="Nguyen C."/>
            <person name="Scott K."/>
            <person name="Holmes A."/>
            <person name="Grewal N."/>
            <person name="Mulvaney E."/>
            <person name="Ryan E."/>
            <person name="Sun H."/>
            <person name="Florea L."/>
            <person name="Miller W."/>
            <person name="Stoneking T."/>
            <person name="Nhan M."/>
            <person name="Waterston R."/>
            <person name="Wilson R.K."/>
        </authorList>
    </citation>
    <scope>NUCLEOTIDE SEQUENCE [LARGE SCALE GENOMIC DNA]</scope>
    <source>
        <strain>LT2 / SGSC1412 / ATCC 700720</strain>
    </source>
</reference>
<name>MURE_SALTY</name>
<proteinExistence type="inferred from homology"/>